<comment type="function">
    <text evidence="1">Involved in the synthesis of autoinducer 2 (AI-2) which is secreted by bacteria and is used to communicate both the cell density and the metabolic potential of the environment. The regulation of gene expression in response to changes in cell density is called quorum sensing. Catalyzes the transformation of S-ribosylhomocysteine (RHC) to homocysteine (HC) and 4,5-dihydroxy-2,3-pentadione (DPD) (By similarity).</text>
</comment>
<comment type="catalytic activity">
    <reaction>
        <text>S-(5-deoxy-D-ribos-5-yl)-L-homocysteine = (S)-4,5-dihydroxypentane-2,3-dione + L-homocysteine</text>
        <dbReference type="Rhea" id="RHEA:17753"/>
        <dbReference type="ChEBI" id="CHEBI:29484"/>
        <dbReference type="ChEBI" id="CHEBI:58195"/>
        <dbReference type="ChEBI" id="CHEBI:58199"/>
        <dbReference type="EC" id="4.4.1.21"/>
    </reaction>
</comment>
<comment type="cofactor">
    <cofactor evidence="1">
        <name>Fe cation</name>
        <dbReference type="ChEBI" id="CHEBI:24875"/>
    </cofactor>
    <text evidence="1">Binds 1 Fe cation per subunit.</text>
</comment>
<comment type="subunit">
    <text evidence="1">Homodimer.</text>
</comment>
<comment type="similarity">
    <text evidence="2">Belongs to the LuxS family.</text>
</comment>
<comment type="sequence caution" evidence="2">
    <conflict type="erroneous initiation">
        <sequence resource="EMBL-CDS" id="AAL98199"/>
    </conflict>
</comment>
<protein>
    <recommendedName>
        <fullName>S-ribosylhomocysteine lyase</fullName>
        <ecNumber>4.4.1.21</ecNumber>
    </recommendedName>
    <alternativeName>
        <fullName>AI-2 synthesis protein</fullName>
    </alternativeName>
    <alternativeName>
        <fullName>Autoinducer-2 production protein LuxS</fullName>
    </alternativeName>
</protein>
<keyword id="KW-0071">Autoinducer synthesis</keyword>
<keyword id="KW-0408">Iron</keyword>
<keyword id="KW-0456">Lyase</keyword>
<keyword id="KW-0479">Metal-binding</keyword>
<keyword id="KW-0673">Quorum sensing</keyword>
<proteinExistence type="inferred from homology"/>
<feature type="chain" id="PRO_0000172271" description="S-ribosylhomocysteine lyase">
    <location>
        <begin position="1"/>
        <end position="160"/>
    </location>
</feature>
<feature type="binding site" evidence="1">
    <location>
        <position position="57"/>
    </location>
    <ligand>
        <name>Fe cation</name>
        <dbReference type="ChEBI" id="CHEBI:24875"/>
    </ligand>
</feature>
<feature type="binding site" evidence="1">
    <location>
        <position position="61"/>
    </location>
    <ligand>
        <name>Fe cation</name>
        <dbReference type="ChEBI" id="CHEBI:24875"/>
    </ligand>
</feature>
<feature type="binding site" evidence="1">
    <location>
        <position position="127"/>
    </location>
    <ligand>
        <name>Fe cation</name>
        <dbReference type="ChEBI" id="CHEBI:24875"/>
    </ligand>
</feature>
<gene>
    <name type="primary">luxS</name>
    <name type="ordered locus">spyM18_1653</name>
</gene>
<accession>P0A3P9</accession>
<accession>Q99YL7</accession>
<accession>Q9EVB4</accession>
<sequence>MTKEVIVESFELDHTIVKAPYVRLISEEFGPKGDRITNFDVRLVQPNQNSIETAGLHTIEHLLAKLIRQRIDGMIDCSPFGCRTGFHLIMWGKHSSTDIAKVIKSSLEEIATGITWEDVPGTTLESCGNYKDHSLFAAKEWAQLIIDQGISDDPFSRHVI</sequence>
<reference key="1">
    <citation type="journal article" date="2002" name="Proc. Natl. Acad. Sci. U.S.A.">
        <title>Genome sequence and comparative microarray analysis of serotype M18 group A Streptococcus strains associated with acute rheumatic fever outbreaks.</title>
        <authorList>
            <person name="Smoot J.C."/>
            <person name="Barbian K.D."/>
            <person name="Van Gompel J.J."/>
            <person name="Smoot L.M."/>
            <person name="Chaussee M.S."/>
            <person name="Sylva G.L."/>
            <person name="Sturdevant D.E."/>
            <person name="Ricklefs S.M."/>
            <person name="Porcella S.F."/>
            <person name="Parkins L.D."/>
            <person name="Beres S.B."/>
            <person name="Campbell D.S."/>
            <person name="Smith T.M."/>
            <person name="Zhang Q."/>
            <person name="Kapur V."/>
            <person name="Daly J.A."/>
            <person name="Veasy L.G."/>
            <person name="Musser J.M."/>
        </authorList>
    </citation>
    <scope>NUCLEOTIDE SEQUENCE [LARGE SCALE GENOMIC DNA]</scope>
    <source>
        <strain>MGAS8232</strain>
    </source>
</reference>
<evidence type="ECO:0000250" key="1"/>
<evidence type="ECO:0000305" key="2"/>
<dbReference type="EC" id="4.4.1.21"/>
<dbReference type="EMBL" id="AE009949">
    <property type="protein sequence ID" value="AAL98199.1"/>
    <property type="status" value="ALT_INIT"/>
    <property type="molecule type" value="Genomic_DNA"/>
</dbReference>
<dbReference type="RefSeq" id="WP_002988938.1">
    <property type="nucleotide sequence ID" value="NC_003485.1"/>
</dbReference>
<dbReference type="SMR" id="P0A3P9"/>
<dbReference type="KEGG" id="spm:spyM18_1653"/>
<dbReference type="HOGENOM" id="CLU_107531_2_1_9"/>
<dbReference type="GO" id="GO:0005506">
    <property type="term" value="F:iron ion binding"/>
    <property type="evidence" value="ECO:0007669"/>
    <property type="project" value="InterPro"/>
</dbReference>
<dbReference type="GO" id="GO:0043768">
    <property type="term" value="F:S-ribosylhomocysteine lyase activity"/>
    <property type="evidence" value="ECO:0007669"/>
    <property type="project" value="UniProtKB-UniRule"/>
</dbReference>
<dbReference type="GO" id="GO:0009372">
    <property type="term" value="P:quorum sensing"/>
    <property type="evidence" value="ECO:0007669"/>
    <property type="project" value="UniProtKB-UniRule"/>
</dbReference>
<dbReference type="Gene3D" id="3.30.1360.80">
    <property type="entry name" value="S-ribosylhomocysteinase (LuxS)"/>
    <property type="match status" value="1"/>
</dbReference>
<dbReference type="HAMAP" id="MF_00091">
    <property type="entry name" value="LuxS"/>
    <property type="match status" value="1"/>
</dbReference>
<dbReference type="InterPro" id="IPR037005">
    <property type="entry name" value="LuxS_sf"/>
</dbReference>
<dbReference type="InterPro" id="IPR011249">
    <property type="entry name" value="Metalloenz_LuxS/M16"/>
</dbReference>
<dbReference type="InterPro" id="IPR003815">
    <property type="entry name" value="S-ribosylhomocysteinase"/>
</dbReference>
<dbReference type="NCBIfam" id="NF002607">
    <property type="entry name" value="PRK02260.2-5"/>
    <property type="match status" value="1"/>
</dbReference>
<dbReference type="NCBIfam" id="NF002608">
    <property type="entry name" value="PRK02260.3-1"/>
    <property type="match status" value="1"/>
</dbReference>
<dbReference type="PANTHER" id="PTHR35799">
    <property type="entry name" value="S-RIBOSYLHOMOCYSTEINE LYASE"/>
    <property type="match status" value="1"/>
</dbReference>
<dbReference type="PANTHER" id="PTHR35799:SF1">
    <property type="entry name" value="S-RIBOSYLHOMOCYSTEINE LYASE"/>
    <property type="match status" value="1"/>
</dbReference>
<dbReference type="Pfam" id="PF02664">
    <property type="entry name" value="LuxS"/>
    <property type="match status" value="1"/>
</dbReference>
<dbReference type="PIRSF" id="PIRSF006160">
    <property type="entry name" value="AI2"/>
    <property type="match status" value="1"/>
</dbReference>
<dbReference type="PRINTS" id="PR01487">
    <property type="entry name" value="LUXSPROTEIN"/>
</dbReference>
<dbReference type="SUPFAM" id="SSF63411">
    <property type="entry name" value="LuxS/MPP-like metallohydrolase"/>
    <property type="match status" value="1"/>
</dbReference>
<name>LUXS_STRP8</name>
<organism>
    <name type="scientific">Streptococcus pyogenes serotype M18 (strain MGAS8232)</name>
    <dbReference type="NCBI Taxonomy" id="186103"/>
    <lineage>
        <taxon>Bacteria</taxon>
        <taxon>Bacillati</taxon>
        <taxon>Bacillota</taxon>
        <taxon>Bacilli</taxon>
        <taxon>Lactobacillales</taxon>
        <taxon>Streptococcaceae</taxon>
        <taxon>Streptococcus</taxon>
    </lineage>
</organism>